<name>TSAD_ANAD2</name>
<protein>
    <recommendedName>
        <fullName evidence="1">tRNA N6-adenosine threonylcarbamoyltransferase</fullName>
        <ecNumber evidence="1">2.3.1.234</ecNumber>
    </recommendedName>
    <alternativeName>
        <fullName evidence="1">N6-L-threonylcarbamoyladenine synthase</fullName>
        <shortName evidence="1">t(6)A synthase</shortName>
    </alternativeName>
    <alternativeName>
        <fullName evidence="1">t(6)A37 threonylcarbamoyladenosine biosynthesis protein TsaD</fullName>
    </alternativeName>
    <alternativeName>
        <fullName evidence="1">tRNA threonylcarbamoyladenosine biosynthesis protein TsaD</fullName>
    </alternativeName>
</protein>
<dbReference type="EC" id="2.3.1.234" evidence="1"/>
<dbReference type="EMBL" id="CP001359">
    <property type="protein sequence ID" value="ACL67152.1"/>
    <property type="molecule type" value="Genomic_DNA"/>
</dbReference>
<dbReference type="RefSeq" id="WP_015934895.1">
    <property type="nucleotide sequence ID" value="NC_011891.1"/>
</dbReference>
<dbReference type="SMR" id="B8J7H2"/>
<dbReference type="KEGG" id="acp:A2cp1_3828"/>
<dbReference type="HOGENOM" id="CLU_023208_0_2_7"/>
<dbReference type="Proteomes" id="UP000007089">
    <property type="component" value="Chromosome"/>
</dbReference>
<dbReference type="GO" id="GO:0005737">
    <property type="term" value="C:cytoplasm"/>
    <property type="evidence" value="ECO:0007669"/>
    <property type="project" value="UniProtKB-SubCell"/>
</dbReference>
<dbReference type="GO" id="GO:0005506">
    <property type="term" value="F:iron ion binding"/>
    <property type="evidence" value="ECO:0007669"/>
    <property type="project" value="UniProtKB-UniRule"/>
</dbReference>
<dbReference type="GO" id="GO:0061711">
    <property type="term" value="F:N(6)-L-threonylcarbamoyladenine synthase activity"/>
    <property type="evidence" value="ECO:0007669"/>
    <property type="project" value="UniProtKB-EC"/>
</dbReference>
<dbReference type="GO" id="GO:0002949">
    <property type="term" value="P:tRNA threonylcarbamoyladenosine modification"/>
    <property type="evidence" value="ECO:0007669"/>
    <property type="project" value="UniProtKB-UniRule"/>
</dbReference>
<dbReference type="CDD" id="cd24133">
    <property type="entry name" value="ASKHA_NBD_TsaD_bac"/>
    <property type="match status" value="1"/>
</dbReference>
<dbReference type="FunFam" id="3.30.420.40:FF:000040">
    <property type="entry name" value="tRNA N6-adenosine threonylcarbamoyltransferase"/>
    <property type="match status" value="1"/>
</dbReference>
<dbReference type="Gene3D" id="3.30.420.40">
    <property type="match status" value="2"/>
</dbReference>
<dbReference type="HAMAP" id="MF_01445">
    <property type="entry name" value="TsaD"/>
    <property type="match status" value="1"/>
</dbReference>
<dbReference type="InterPro" id="IPR043129">
    <property type="entry name" value="ATPase_NBD"/>
</dbReference>
<dbReference type="InterPro" id="IPR000905">
    <property type="entry name" value="Gcp-like_dom"/>
</dbReference>
<dbReference type="InterPro" id="IPR017861">
    <property type="entry name" value="KAE1/TsaD"/>
</dbReference>
<dbReference type="InterPro" id="IPR017860">
    <property type="entry name" value="Peptidase_M22_CS"/>
</dbReference>
<dbReference type="InterPro" id="IPR022450">
    <property type="entry name" value="TsaD"/>
</dbReference>
<dbReference type="NCBIfam" id="TIGR00329">
    <property type="entry name" value="gcp_kae1"/>
    <property type="match status" value="1"/>
</dbReference>
<dbReference type="NCBIfam" id="TIGR03723">
    <property type="entry name" value="T6A_TsaD_YgjD"/>
    <property type="match status" value="1"/>
</dbReference>
<dbReference type="PANTHER" id="PTHR11735">
    <property type="entry name" value="TRNA N6-ADENOSINE THREONYLCARBAMOYLTRANSFERASE"/>
    <property type="match status" value="1"/>
</dbReference>
<dbReference type="PANTHER" id="PTHR11735:SF6">
    <property type="entry name" value="TRNA N6-ADENOSINE THREONYLCARBAMOYLTRANSFERASE, MITOCHONDRIAL"/>
    <property type="match status" value="1"/>
</dbReference>
<dbReference type="Pfam" id="PF00814">
    <property type="entry name" value="TsaD"/>
    <property type="match status" value="1"/>
</dbReference>
<dbReference type="PRINTS" id="PR00789">
    <property type="entry name" value="OSIALOPTASE"/>
</dbReference>
<dbReference type="SUPFAM" id="SSF53067">
    <property type="entry name" value="Actin-like ATPase domain"/>
    <property type="match status" value="2"/>
</dbReference>
<dbReference type="PROSITE" id="PS01016">
    <property type="entry name" value="GLYCOPROTEASE"/>
    <property type="match status" value="1"/>
</dbReference>
<comment type="function">
    <text evidence="1">Required for the formation of a threonylcarbamoyl group on adenosine at position 37 (t(6)A37) in tRNAs that read codons beginning with adenine. Is involved in the transfer of the threonylcarbamoyl moiety of threonylcarbamoyl-AMP (TC-AMP) to the N6 group of A37, together with TsaE and TsaB. TsaD likely plays a direct catalytic role in this reaction.</text>
</comment>
<comment type="catalytic activity">
    <reaction evidence="1">
        <text>L-threonylcarbamoyladenylate + adenosine(37) in tRNA = N(6)-L-threonylcarbamoyladenosine(37) in tRNA + AMP + H(+)</text>
        <dbReference type="Rhea" id="RHEA:37059"/>
        <dbReference type="Rhea" id="RHEA-COMP:10162"/>
        <dbReference type="Rhea" id="RHEA-COMP:10163"/>
        <dbReference type="ChEBI" id="CHEBI:15378"/>
        <dbReference type="ChEBI" id="CHEBI:73682"/>
        <dbReference type="ChEBI" id="CHEBI:74411"/>
        <dbReference type="ChEBI" id="CHEBI:74418"/>
        <dbReference type="ChEBI" id="CHEBI:456215"/>
        <dbReference type="EC" id="2.3.1.234"/>
    </reaction>
</comment>
<comment type="cofactor">
    <cofactor evidence="1">
        <name>Fe(2+)</name>
        <dbReference type="ChEBI" id="CHEBI:29033"/>
    </cofactor>
    <text evidence="1">Binds 1 Fe(2+) ion per subunit.</text>
</comment>
<comment type="subcellular location">
    <subcellularLocation>
        <location evidence="1">Cytoplasm</location>
    </subcellularLocation>
</comment>
<comment type="similarity">
    <text evidence="1">Belongs to the KAE1 / TsaD family.</text>
</comment>
<sequence>MTRVLAIETSCDETACAVVEDGRRALSDVVSTQIDIHRRWGGVVPELASRNHVVQVMPVVDEALARSGVGPDGLDAVAVTSGPGLVGALLVGVQAAKALALAWGKPLVGVNHLEGHLVAAFLAEVPPAFPYLGLVVSGGHTSLYAAHGFGDYRLLGQTRDDAAGEAFDKGAKLLGLPYPGGVAIDRLAKEGDPAAIRFPKAIVKGADLDFSFSGLKTALLHHVKKHGVPEGPALADLCASYQEAIVRALVEKAFRAARRLQFERLVLAGGVAANSRLRAAATARAAEYEGMSVFIPPVRLCTDNAAMIAVAGTHALLRGERAGPDLNADPAWRL</sequence>
<gene>
    <name evidence="1" type="primary">tsaD</name>
    <name type="synonym">gcp</name>
    <name type="ordered locus">A2cp1_3828</name>
</gene>
<organism>
    <name type="scientific">Anaeromyxobacter dehalogenans (strain 2CP-1 / ATCC BAA-258)</name>
    <dbReference type="NCBI Taxonomy" id="455488"/>
    <lineage>
        <taxon>Bacteria</taxon>
        <taxon>Pseudomonadati</taxon>
        <taxon>Myxococcota</taxon>
        <taxon>Myxococcia</taxon>
        <taxon>Myxococcales</taxon>
        <taxon>Cystobacterineae</taxon>
        <taxon>Anaeromyxobacteraceae</taxon>
        <taxon>Anaeromyxobacter</taxon>
    </lineage>
</organism>
<accession>B8J7H2</accession>
<reference key="1">
    <citation type="submission" date="2009-01" db="EMBL/GenBank/DDBJ databases">
        <title>Complete sequence of Anaeromyxobacter dehalogenans 2CP-1.</title>
        <authorList>
            <person name="Lucas S."/>
            <person name="Copeland A."/>
            <person name="Lapidus A."/>
            <person name="Glavina del Rio T."/>
            <person name="Dalin E."/>
            <person name="Tice H."/>
            <person name="Bruce D."/>
            <person name="Goodwin L."/>
            <person name="Pitluck S."/>
            <person name="Saunders E."/>
            <person name="Brettin T."/>
            <person name="Detter J.C."/>
            <person name="Han C."/>
            <person name="Larimer F."/>
            <person name="Land M."/>
            <person name="Hauser L."/>
            <person name="Kyrpides N."/>
            <person name="Ovchinnikova G."/>
            <person name="Beliaev A.S."/>
            <person name="Richardson P."/>
        </authorList>
    </citation>
    <scope>NUCLEOTIDE SEQUENCE [LARGE SCALE GENOMIC DNA]</scope>
    <source>
        <strain>2CP-1 / ATCC BAA-258</strain>
    </source>
</reference>
<feature type="chain" id="PRO_1000184950" description="tRNA N6-adenosine threonylcarbamoyltransferase">
    <location>
        <begin position="1"/>
        <end position="334"/>
    </location>
</feature>
<feature type="binding site" evidence="1">
    <location>
        <position position="112"/>
    </location>
    <ligand>
        <name>Fe cation</name>
        <dbReference type="ChEBI" id="CHEBI:24875"/>
    </ligand>
</feature>
<feature type="binding site" evidence="1">
    <location>
        <position position="116"/>
    </location>
    <ligand>
        <name>Fe cation</name>
        <dbReference type="ChEBI" id="CHEBI:24875"/>
    </ligand>
</feature>
<feature type="binding site" evidence="1">
    <location>
        <begin position="135"/>
        <end position="139"/>
    </location>
    <ligand>
        <name>substrate</name>
    </ligand>
</feature>
<feature type="binding site" evidence="1">
    <location>
        <position position="168"/>
    </location>
    <ligand>
        <name>substrate</name>
    </ligand>
</feature>
<feature type="binding site" evidence="1">
    <location>
        <position position="181"/>
    </location>
    <ligand>
        <name>substrate</name>
    </ligand>
</feature>
<feature type="binding site" evidence="1">
    <location>
        <position position="185"/>
    </location>
    <ligand>
        <name>substrate</name>
    </ligand>
</feature>
<feature type="binding site" evidence="1">
    <location>
        <position position="274"/>
    </location>
    <ligand>
        <name>substrate</name>
    </ligand>
</feature>
<feature type="binding site" evidence="1">
    <location>
        <position position="303"/>
    </location>
    <ligand>
        <name>Fe cation</name>
        <dbReference type="ChEBI" id="CHEBI:24875"/>
    </ligand>
</feature>
<evidence type="ECO:0000255" key="1">
    <source>
        <dbReference type="HAMAP-Rule" id="MF_01445"/>
    </source>
</evidence>
<keyword id="KW-0012">Acyltransferase</keyword>
<keyword id="KW-0963">Cytoplasm</keyword>
<keyword id="KW-0408">Iron</keyword>
<keyword id="KW-0479">Metal-binding</keyword>
<keyword id="KW-0808">Transferase</keyword>
<keyword id="KW-0819">tRNA processing</keyword>
<proteinExistence type="inferred from homology"/>